<sequence>MAKKVAVIGAGVSGLISLKCCVDEGLEPTCFERTEDIGGVWRFKENVEDGRASIYQSVVTNTSKEMSCFSDFPMPEDFPNFLHNSKLLEYFRIFAKKFDLLKYIQFQTTVLSVRKCPDFSSSGQWKVVTQSNGKEQSAVFDAVMVCSGHHILPHIPLKSFPGMERFKGQYFHSRQYKHPDGFEGKRILVIGMGNSGSDIAVELSKNAAQVFISTRHGTWVMSRISEDGYPWDSVFHTRFRSMLRNVLPRTAVKWMIEQQMNRWFNHENYGLEPQNKYIMKEPVLNDDVPSRLLCGAIKVKSTVKELTETSAIFEDGTVEENIDVIIFATGYSFSFPFLEDSLVKVENNMVSLYKYIFPAHLDKSTLACIGLIQPLGSIFPTAELQARWVTRVFKGLCSLPSERTMMMDIIKRNEKRIDLFGESQSQTLQTNYVDYLDELALEIGAKPDFCSLLFKDPKLAVRLYFGPCNSYQYRLVGPGQWEGARNAIFTQKQRILKPLKTRALKDSSNFSVSFLLKILGLLAVVVAFFCQLQWS</sequence>
<gene>
    <name evidence="18" type="primary">FMO2</name>
</gene>
<feature type="initiator methionine" description="Removed" evidence="1">
    <location>
        <position position="1"/>
    </location>
</feature>
<feature type="chain" id="PRO_0000147646" description="Flavin-containing monooxygenase 2">
    <location>
        <begin position="2"/>
        <end position="535"/>
    </location>
</feature>
<feature type="transmembrane region" description="Helical" evidence="3">
    <location>
        <begin position="510"/>
        <end position="530"/>
    </location>
</feature>
<feature type="binding site" evidence="2">
    <location>
        <begin position="9"/>
        <end position="13"/>
    </location>
    <ligand>
        <name>FAD</name>
        <dbReference type="ChEBI" id="CHEBI:57692"/>
    </ligand>
</feature>
<feature type="binding site" evidence="2">
    <location>
        <position position="32"/>
    </location>
    <ligand>
        <name>FAD</name>
        <dbReference type="ChEBI" id="CHEBI:57692"/>
    </ligand>
</feature>
<feature type="binding site" evidence="2">
    <location>
        <begin position="40"/>
        <end position="41"/>
    </location>
    <ligand>
        <name>FAD</name>
        <dbReference type="ChEBI" id="CHEBI:57692"/>
    </ligand>
</feature>
<feature type="binding site" evidence="2">
    <location>
        <begin position="60"/>
        <end position="61"/>
    </location>
    <ligand>
        <name>NADP(+)</name>
        <dbReference type="ChEBI" id="CHEBI:58349"/>
    </ligand>
</feature>
<feature type="binding site" evidence="2">
    <location>
        <begin position="61"/>
        <end position="62"/>
    </location>
    <ligand>
        <name>FAD</name>
        <dbReference type="ChEBI" id="CHEBI:57692"/>
    </ligand>
</feature>
<feature type="binding site" evidence="2">
    <location>
        <begin position="195"/>
        <end position="198"/>
    </location>
    <ligand>
        <name>NADP(+)</name>
        <dbReference type="ChEBI" id="CHEBI:58349"/>
    </ligand>
</feature>
<feature type="modified residue" description="N-acetylalanine" evidence="1">
    <location>
        <position position="2"/>
    </location>
</feature>
<feature type="cross-link" description="Glycyl lysine isopeptide (Lys-Gly) (interchain with G-Cter in SUMO)" evidence="12">
    <location>
        <position position="492"/>
    </location>
</feature>
<feature type="sequence variant" id="VAR_014840" description="In dbSNP:rs2020870." evidence="5 14">
    <original>D</original>
    <variation>G</variation>
    <location>
        <position position="36"/>
    </location>
</feature>
<feature type="sequence variant" id="VAR_015361" description="In dbSNP:rs55708639." evidence="5">
    <original>V</original>
    <variation>I</variation>
    <location>
        <position position="59"/>
    </location>
</feature>
<feature type="sequence variant" id="VAR_022185" description="In dbSNP:rs28745274." evidence="14">
    <original>F</original>
    <variation>Y</variation>
    <location>
        <position position="69"/>
    </location>
</feature>
<feature type="sequence variant" id="VAR_014841" description="In dbSNP:rs2020860." evidence="14">
    <original>F</original>
    <variation>S</variation>
    <location>
        <position position="81"/>
    </location>
</feature>
<feature type="sequence variant" id="VAR_014842" description="In dbSNP:rs2307492." evidence="5 14">
    <original>F</original>
    <variation>S</variation>
    <location>
        <position position="182"/>
    </location>
</feature>
<feature type="sequence variant" id="VAR_014843" description="In dbSNP:rs2020862." evidence="5 14">
    <original>S</original>
    <variation>L</variation>
    <location>
        <position position="195"/>
    </location>
</feature>
<feature type="sequence variant" id="VAR_015362" description="In dbSNP:rs28369895." evidence="5 14">
    <original>R</original>
    <variation>Q</variation>
    <location>
        <position position="238"/>
    </location>
</feature>
<feature type="sequence variant" id="VAR_022186" description="In dbSNP:rs2020863." evidence="14">
    <original>E</original>
    <variation>G</variation>
    <location>
        <position position="314"/>
    </location>
</feature>
<feature type="sequence variant" id="VAR_015363" description="In dbSNP:rs28369899." evidence="5 14">
    <original>R</original>
    <variation>T</variation>
    <location>
        <position position="391"/>
    </location>
</feature>
<feature type="sequence variant" id="VAR_014844" description="In dbSNP:rs2020865." evidence="5 14">
    <original>N</original>
    <variation>K</variation>
    <location>
        <position position="413"/>
    </location>
</feature>
<feature type="sequence variant" id="VAR_081836" description="In allele FMO2*2A; loss of monooxygenase activity." evidence="8 13 14 15 16">
    <location>
        <begin position="472"/>
        <end position="535"/>
    </location>
</feature>
<feature type="sequence conflict" description="In Ref. 2; AAW82431." evidence="17" ref="2">
    <original>D</original>
    <variation>DD</variation>
    <location>
        <position position="71"/>
    </location>
</feature>
<proteinExistence type="evidence at protein level"/>
<name>FMO2_HUMAN</name>
<keyword id="KW-0007">Acetylation</keyword>
<keyword id="KW-0256">Endoplasmic reticulum</keyword>
<keyword id="KW-0274">FAD</keyword>
<keyword id="KW-0285">Flavoprotein</keyword>
<keyword id="KW-1017">Isopeptide bond</keyword>
<keyword id="KW-0460">Magnesium</keyword>
<keyword id="KW-0472">Membrane</keyword>
<keyword id="KW-0492">Microsome</keyword>
<keyword id="KW-0503">Monooxygenase</keyword>
<keyword id="KW-0521">NADP</keyword>
<keyword id="KW-0560">Oxidoreductase</keyword>
<keyword id="KW-1267">Proteomics identification</keyword>
<keyword id="KW-1185">Reference proteome</keyword>
<keyword id="KW-0812">Transmembrane</keyword>
<keyword id="KW-1133">Transmembrane helix</keyword>
<keyword id="KW-0832">Ubl conjugation</keyword>
<organism>
    <name type="scientific">Homo sapiens</name>
    <name type="common">Human</name>
    <dbReference type="NCBI Taxonomy" id="9606"/>
    <lineage>
        <taxon>Eukaryota</taxon>
        <taxon>Metazoa</taxon>
        <taxon>Chordata</taxon>
        <taxon>Craniata</taxon>
        <taxon>Vertebrata</taxon>
        <taxon>Euteleostomi</taxon>
        <taxon>Mammalia</taxon>
        <taxon>Eutheria</taxon>
        <taxon>Euarchontoglires</taxon>
        <taxon>Primates</taxon>
        <taxon>Haplorrhini</taxon>
        <taxon>Catarrhini</taxon>
        <taxon>Hominidae</taxon>
        <taxon>Homo</taxon>
    </lineage>
</organism>
<reference key="1">
    <citation type="journal article" date="1998" name="J. Biol. Chem.">
        <title>The flavin-containing monooxygenase 2 gene (FMO2) of humans, but not of other primates, encodes a truncated, nonfunctional protein.</title>
        <authorList>
            <person name="Dolphin C.T."/>
            <person name="Beckett D.J."/>
            <person name="Janmohamed A."/>
            <person name="Cullingford T.E."/>
            <person name="Smith R.L."/>
            <person name="Shephard E.A."/>
            <person name="Phillips I.R."/>
        </authorList>
    </citation>
    <scope>NUCLEOTIDE SEQUENCE [MRNA] (ALLELE FMO2*2A)</scope>
    <scope>FUNCTION</scope>
    <scope>CATALYTIC ACTIVITY</scope>
    <scope>SUBCELLULAR LOCATION</scope>
    <scope>TISSUE SPECIFICITY</scope>
    <scope>POLYMORPHISM</scope>
    <scope>CHARACTERIZATION OF VARIANT 472-GLN--SER-535 DEL</scope>
    <source>
        <tissue>Lung</tissue>
    </source>
</reference>
<reference key="2">
    <citation type="submission" date="2005-01" db="EMBL/GenBank/DDBJ databases">
        <authorList>
            <consortium name="NIEHS SNPs program"/>
        </authorList>
    </citation>
    <scope>NUCLEOTIDE SEQUENCE [GENOMIC DNA] (ALLELE FMO2*2A)</scope>
    <scope>VARIANTS GLY-36; TYR-69; SER-81; SER-182; LEU-195; GLN-238; GLY-314; THR-391 AND LYS-413</scope>
</reference>
<reference key="3">
    <citation type="submission" date="2003-05" db="EMBL/GenBank/DDBJ databases">
        <title>Cloning of human full-length CDSs in BD Creator(TM) system donor vector.</title>
        <authorList>
            <person name="Kalnine N."/>
            <person name="Chen X."/>
            <person name="Rolfs A."/>
            <person name="Halleck A."/>
            <person name="Hines L."/>
            <person name="Eisenstein S."/>
            <person name="Koundinya M."/>
            <person name="Raphael J."/>
            <person name="Moreira D."/>
            <person name="Kelley T."/>
            <person name="LaBaer J."/>
            <person name="Lin Y."/>
            <person name="Phelan M."/>
            <person name="Farmer A."/>
        </authorList>
    </citation>
    <scope>NUCLEOTIDE SEQUENCE [LARGE SCALE MRNA] (ALLELE FMO2*2A)</scope>
</reference>
<reference key="4">
    <citation type="journal article" date="2006" name="Nature">
        <title>The DNA sequence and biological annotation of human chromosome 1.</title>
        <authorList>
            <person name="Gregory S.G."/>
            <person name="Barlow K.F."/>
            <person name="McLay K.E."/>
            <person name="Kaul R."/>
            <person name="Swarbreck D."/>
            <person name="Dunham A."/>
            <person name="Scott C.E."/>
            <person name="Howe K.L."/>
            <person name="Woodfine K."/>
            <person name="Spencer C.C.A."/>
            <person name="Jones M.C."/>
            <person name="Gillson C."/>
            <person name="Searle S."/>
            <person name="Zhou Y."/>
            <person name="Kokocinski F."/>
            <person name="McDonald L."/>
            <person name="Evans R."/>
            <person name="Phillips K."/>
            <person name="Atkinson A."/>
            <person name="Cooper R."/>
            <person name="Jones C."/>
            <person name="Hall R.E."/>
            <person name="Andrews T.D."/>
            <person name="Lloyd C."/>
            <person name="Ainscough R."/>
            <person name="Almeida J.P."/>
            <person name="Ambrose K.D."/>
            <person name="Anderson F."/>
            <person name="Andrew R.W."/>
            <person name="Ashwell R.I.S."/>
            <person name="Aubin K."/>
            <person name="Babbage A.K."/>
            <person name="Bagguley C.L."/>
            <person name="Bailey J."/>
            <person name="Beasley H."/>
            <person name="Bethel G."/>
            <person name="Bird C.P."/>
            <person name="Bray-Allen S."/>
            <person name="Brown J.Y."/>
            <person name="Brown A.J."/>
            <person name="Buckley D."/>
            <person name="Burton J."/>
            <person name="Bye J."/>
            <person name="Carder C."/>
            <person name="Chapman J.C."/>
            <person name="Clark S.Y."/>
            <person name="Clarke G."/>
            <person name="Clee C."/>
            <person name="Cobley V."/>
            <person name="Collier R.E."/>
            <person name="Corby N."/>
            <person name="Coville G.J."/>
            <person name="Davies J."/>
            <person name="Deadman R."/>
            <person name="Dunn M."/>
            <person name="Earthrowl M."/>
            <person name="Ellington A.G."/>
            <person name="Errington H."/>
            <person name="Frankish A."/>
            <person name="Frankland J."/>
            <person name="French L."/>
            <person name="Garner P."/>
            <person name="Garnett J."/>
            <person name="Gay L."/>
            <person name="Ghori M.R.J."/>
            <person name="Gibson R."/>
            <person name="Gilby L.M."/>
            <person name="Gillett W."/>
            <person name="Glithero R.J."/>
            <person name="Grafham D.V."/>
            <person name="Griffiths C."/>
            <person name="Griffiths-Jones S."/>
            <person name="Grocock R."/>
            <person name="Hammond S."/>
            <person name="Harrison E.S.I."/>
            <person name="Hart E."/>
            <person name="Haugen E."/>
            <person name="Heath P.D."/>
            <person name="Holmes S."/>
            <person name="Holt K."/>
            <person name="Howden P.J."/>
            <person name="Hunt A.R."/>
            <person name="Hunt S.E."/>
            <person name="Hunter G."/>
            <person name="Isherwood J."/>
            <person name="James R."/>
            <person name="Johnson C."/>
            <person name="Johnson D."/>
            <person name="Joy A."/>
            <person name="Kay M."/>
            <person name="Kershaw J.K."/>
            <person name="Kibukawa M."/>
            <person name="Kimberley A.M."/>
            <person name="King A."/>
            <person name="Knights A.J."/>
            <person name="Lad H."/>
            <person name="Laird G."/>
            <person name="Lawlor S."/>
            <person name="Leongamornlert D.A."/>
            <person name="Lloyd D.M."/>
            <person name="Loveland J."/>
            <person name="Lovell J."/>
            <person name="Lush M.J."/>
            <person name="Lyne R."/>
            <person name="Martin S."/>
            <person name="Mashreghi-Mohammadi M."/>
            <person name="Matthews L."/>
            <person name="Matthews N.S.W."/>
            <person name="McLaren S."/>
            <person name="Milne S."/>
            <person name="Mistry S."/>
            <person name="Moore M.J.F."/>
            <person name="Nickerson T."/>
            <person name="O'Dell C.N."/>
            <person name="Oliver K."/>
            <person name="Palmeiri A."/>
            <person name="Palmer S.A."/>
            <person name="Parker A."/>
            <person name="Patel D."/>
            <person name="Pearce A.V."/>
            <person name="Peck A.I."/>
            <person name="Pelan S."/>
            <person name="Phelps K."/>
            <person name="Phillimore B.J."/>
            <person name="Plumb R."/>
            <person name="Rajan J."/>
            <person name="Raymond C."/>
            <person name="Rouse G."/>
            <person name="Saenphimmachak C."/>
            <person name="Sehra H.K."/>
            <person name="Sheridan E."/>
            <person name="Shownkeen R."/>
            <person name="Sims S."/>
            <person name="Skuce C.D."/>
            <person name="Smith M."/>
            <person name="Steward C."/>
            <person name="Subramanian S."/>
            <person name="Sycamore N."/>
            <person name="Tracey A."/>
            <person name="Tromans A."/>
            <person name="Van Helmond Z."/>
            <person name="Wall M."/>
            <person name="Wallis J.M."/>
            <person name="White S."/>
            <person name="Whitehead S.L."/>
            <person name="Wilkinson J.E."/>
            <person name="Willey D.L."/>
            <person name="Williams H."/>
            <person name="Wilming L."/>
            <person name="Wray P.W."/>
            <person name="Wu Z."/>
            <person name="Coulson A."/>
            <person name="Vaudin M."/>
            <person name="Sulston J.E."/>
            <person name="Durbin R.M."/>
            <person name="Hubbard T."/>
            <person name="Wooster R."/>
            <person name="Dunham I."/>
            <person name="Carter N.P."/>
            <person name="McVean G."/>
            <person name="Ross M.T."/>
            <person name="Harrow J."/>
            <person name="Olson M.V."/>
            <person name="Beck S."/>
            <person name="Rogers J."/>
            <person name="Bentley D.R."/>
        </authorList>
    </citation>
    <scope>NUCLEOTIDE SEQUENCE [LARGE SCALE GENOMIC DNA] (ALLELE FMO2*1)</scope>
</reference>
<reference key="5">
    <citation type="submission" date="2005-07" db="EMBL/GenBank/DDBJ databases">
        <authorList>
            <person name="Mural R.J."/>
            <person name="Istrail S."/>
            <person name="Sutton G."/>
            <person name="Florea L."/>
            <person name="Halpern A.L."/>
            <person name="Mobarry C.M."/>
            <person name="Lippert R."/>
            <person name="Walenz B."/>
            <person name="Shatkay H."/>
            <person name="Dew I."/>
            <person name="Miller J.R."/>
            <person name="Flanigan M.J."/>
            <person name="Edwards N.J."/>
            <person name="Bolanos R."/>
            <person name="Fasulo D."/>
            <person name="Halldorsson B.V."/>
            <person name="Hannenhalli S."/>
            <person name="Turner R."/>
            <person name="Yooseph S."/>
            <person name="Lu F."/>
            <person name="Nusskern D.R."/>
            <person name="Shue B.C."/>
            <person name="Zheng X.H."/>
            <person name="Zhong F."/>
            <person name="Delcher A.L."/>
            <person name="Huson D.H."/>
            <person name="Kravitz S.A."/>
            <person name="Mouchard L."/>
            <person name="Reinert K."/>
            <person name="Remington K.A."/>
            <person name="Clark A.G."/>
            <person name="Waterman M.S."/>
            <person name="Eichler E.E."/>
            <person name="Adams M.D."/>
            <person name="Hunkapiller M.W."/>
            <person name="Myers E.W."/>
            <person name="Venter J.C."/>
        </authorList>
    </citation>
    <scope>NUCLEOTIDE SEQUENCE [LARGE SCALE GENOMIC DNA] (ALLELE FMO2*2A)</scope>
</reference>
<reference key="6">
    <citation type="journal article" date="2004" name="Genome Res.">
        <title>The status, quality, and expansion of the NIH full-length cDNA project: the Mammalian Gene Collection (MGC).</title>
        <authorList>
            <consortium name="The MGC Project Team"/>
        </authorList>
    </citation>
    <scope>NUCLEOTIDE SEQUENCE [LARGE SCALE MRNA] (ALLELE FMO2*2A)</scope>
    <source>
        <tissue>Skeletal muscle</tissue>
    </source>
</reference>
<reference key="7">
    <citation type="journal article" date="2000" name="Toxicol. Appl. Pharmacol.">
        <title>Ethnic differences in human flavin-containing monooxygenase 2 (FMO2) polymorphisms: detection of expressed protein in African-Americans.</title>
        <authorList>
            <person name="Whetstine J.R."/>
            <person name="Yueh M.F."/>
            <person name="McCarver D.G."/>
            <person name="Williams D.E."/>
            <person name="Park C.S."/>
            <person name="Kang J.H."/>
            <person name="Cha Y.N."/>
            <person name="Dolphin C.T."/>
            <person name="Shephard E.A."/>
            <person name="Phillips I.R."/>
            <person name="Hines R.N."/>
        </authorList>
    </citation>
    <scope>SUBCELLULAR LOCATION</scope>
    <scope>TISSUE SPECIFICITY</scope>
    <scope>POLYMORPHISM</scope>
</reference>
<reference key="8">
    <citation type="journal article" date="2004" name="Biochem. Pharmacol.">
        <title>S-oxygenation of the thioether organophosphate insecticides phorate and disulfoton by human lung flavin-containing monooxygenase 2.</title>
        <authorList>
            <person name="Henderson M.C."/>
            <person name="Krueger S.K."/>
            <person name="Siddens L.K."/>
            <person name="Stevens J.F."/>
            <person name="Williams D.E."/>
        </authorList>
    </citation>
    <scope>FUNCTION</scope>
    <scope>BIOPHYSICOCHEMICAL PROPERTIES</scope>
</reference>
<reference key="9">
    <citation type="journal article" date="2004" name="Chem. Res. Toxicol.">
        <title>Human flavin-containing monooxygenase form 2 S-oxygenation: sulfenic acid formation from thioureas and oxidation of glutathione.</title>
        <authorList>
            <person name="Henderson M.C."/>
            <person name="Krueger S.K."/>
            <person name="Stevens J.F."/>
            <person name="Williams D.E."/>
        </authorList>
    </citation>
    <scope>FUNCTION</scope>
    <scope>BIOPHYSICOCHEMICAL PROPERTIES</scope>
</reference>
<reference key="10">
    <citation type="journal article" date="2008" name="Toxicol. Appl. Pharmacol.">
        <title>Metabolism of the anti-tuberculosis drug ethionamide by mouse and human FMO1, FMO2 and FMO3 and mouse and human lung microsomes.</title>
        <authorList>
            <person name="Henderson M.C."/>
            <person name="Siddens L.K."/>
            <person name="Morre J.T."/>
            <person name="Krueger S.K."/>
            <person name="Williams D.E."/>
        </authorList>
    </citation>
    <scope>FUNCTION</scope>
    <scope>BIOPHYSICOCHEMICAL PROPERTIES</scope>
</reference>
<reference key="11">
    <citation type="journal article" date="2009" name="Drug Metab. Dispos.">
        <title>Human flavin-containing monooxygenase 2.1 catalyzes oxygenation of the antitubercular drugs thiacetazone and ethionamide.</title>
        <authorList>
            <person name="Francois A.A."/>
            <person name="Nishida C.R."/>
            <person name="de Montellano P.R."/>
            <person name="Phillips I.R."/>
            <person name="Shephard E.A."/>
        </authorList>
    </citation>
    <scope>FUNCTION</scope>
    <scope>BIOPHYSICOCHEMICAL PROPERTIES</scope>
</reference>
<reference key="12">
    <citation type="journal article" date="2010" name="J. Biol. Chem.">
        <title>In vivo identification of sumoylation sites by a signature tag and cysteine-targeted affinity purification.</title>
        <authorList>
            <person name="Blomster H.A."/>
            <person name="Imanishi S.Y."/>
            <person name="Siimes J."/>
            <person name="Kastu J."/>
            <person name="Morrice N.A."/>
            <person name="Eriksson J.E."/>
            <person name="Sistonen L."/>
        </authorList>
    </citation>
    <scope>SUMOYLATION AT LYS-492</scope>
    <source>
        <tissue>Cervix carcinoma</tissue>
    </source>
</reference>
<reference key="13">
    <citation type="journal article" date="2003" name="Drug Metab. Dispos.">
        <title>Identification of novel variants of the flavin-containing monooxygenase gene family in African Americans.</title>
        <authorList>
            <person name="Furnes B."/>
            <person name="Feng J."/>
            <person name="Sommer S.S."/>
            <person name="Schlenk D."/>
        </authorList>
    </citation>
    <scope>VARIANTS GLY-36; ILE-59; SER-182; LEU-195; GLN-238; THR-391 AND LYS-413</scope>
</reference>
<reference key="14">
    <citation type="journal article" date="2008" name="Pharmacogenet. Genomics">
        <title>The potentially deleterious functional variant flavin-containing monooxygenase 2*1 is at high frequency throughout sub-Saharan Africa.</title>
        <authorList>
            <person name="Veeramah K.R."/>
            <person name="Thomas M.G."/>
            <person name="Weale M.E."/>
            <person name="Zeitlyn D."/>
            <person name="Tarekegn A."/>
            <person name="Bekele E."/>
            <person name="Mendell N.R."/>
            <person name="Shephard E.A."/>
            <person name="Bradman N."/>
            <person name="Phillips I.R."/>
        </authorList>
    </citation>
    <scope>POLYMORPHISM</scope>
</reference>
<protein>
    <recommendedName>
        <fullName evidence="17">Flavin-containing monooxygenase 2</fullName>
        <ecNumber evidence="13">1.14.13.-</ecNumber>
    </recommendedName>
    <alternativeName>
        <fullName>Dimethylaniline oxidase 2</fullName>
    </alternativeName>
    <alternativeName>
        <fullName>FMO 1B1</fullName>
    </alternativeName>
    <alternativeName>
        <fullName>Pulmonary flavin-containing monooxygenase 2</fullName>
        <shortName>FMO 2</shortName>
    </alternativeName>
</protein>
<comment type="function">
    <text evidence="6 7 10 11 13">Catalyzes the oxidative metabolism of numerous xenobiotics, including mainly therapeutic drugs and insecticides that contain a soft nucleophile, most commonly nitrogen and sulfur and participates to their bioactivation (PubMed:15144220, PubMed:15294458, PubMed:18930751, PubMed:18948378, PubMed:9804831). Specifically catalyzes S-oxygenation of sulfur derived compounds such as thioureas-derived compounds, thioetherorganophosphates to their sulfenic acid (PubMed:15144220, PubMed:9804831). In vitro, catalyzes S-oxygenation of the second-line antitubercular drugs thiacetazone (TAZ) and ethionamide (ETA), forming a sulfinic acid and a carbodiimide via a postulated sulfenic acid intermediate (PubMed:18930751, PubMed:18948378). Also catalyzes S-oxygenation of the thioether-containing organophosphate insecticides, phorate and disulfoton (PubMed:15294458).</text>
</comment>
<comment type="cofactor">
    <cofactor>
        <name>FAD</name>
        <dbReference type="ChEBI" id="CHEBI:57692"/>
    </cofactor>
</comment>
<comment type="cofactor">
    <cofactor>
        <name>Mg(2+)</name>
        <dbReference type="ChEBI" id="CHEBI:18420"/>
    </cofactor>
</comment>
<comment type="biophysicochemical properties">
    <kinetics>
        <KM evidence="13">411 uM for methimazole</KM>
        <KM evidence="6">27 uM for thiourea</KM>
        <KM evidence="6">14 uM for ethylenethiourea</KM>
        <KM evidence="6">29 uM for N-phenylthiourea</KM>
        <KM evidence="6">42 uM for ANTU</KM>
        <KM evidence="11">5.8 uM for thioacetazone</KM>
        <KM evidence="11">575.75 uM for methimazole</KM>
        <KM evidence="10">261 uM for ethionamide</KM>
        <KM evidence="7">57 uM for phorate</KM>
        <KM evidence="7">32 uM for disulfoton</KM>
    </kinetics>
</comment>
<comment type="subcellular location">
    <subcellularLocation>
        <location evidence="1">Microsome membrane</location>
        <topology evidence="3">Single-pass membrane protein</topology>
    </subcellularLocation>
    <subcellularLocation>
        <location evidence="1">Endoplasmic reticulum membrane</location>
        <topology evidence="3">Single-pass membrane protein</topology>
    </subcellularLocation>
</comment>
<comment type="tissue specificity">
    <text evidence="4 13">Expressed in lung (at protein level). Expressed predominantly in lung, and at a much lesser extent in kidney. Also expressed in fetal lung, but not in liver, kidney and brain.</text>
</comment>
<comment type="polymorphism">
    <text evidence="4 9 13">The sequence shown is that of the allele FMO2*1. FMO2*2A is the major allele in the human population, however it encodes a truncated and catalytically inactive protein (PubMed:9804831). FMO2*2A occurs in essentially 100% of Caucasians and Asians (PubMed:9804831). FMO2*1 is present at a frequency of approximately 4% to 13% in the sample of population of African descent (PubMed:11042094, PubMed:18794725, PubMed:9804831).</text>
</comment>
<comment type="similarity">
    <text evidence="17">Belongs to the FMO family.</text>
</comment>
<dbReference type="EC" id="1.14.13.-" evidence="13"/>
<dbReference type="EMBL" id="Y09267">
    <property type="protein sequence ID" value="CAA70462.1"/>
    <property type="molecule type" value="mRNA"/>
</dbReference>
<dbReference type="EMBL" id="AY916056">
    <property type="protein sequence ID" value="AAW82431.1"/>
    <property type="molecule type" value="Genomic_DNA"/>
</dbReference>
<dbReference type="EMBL" id="BT006979">
    <property type="protein sequence ID" value="AAP35625.1"/>
    <property type="molecule type" value="mRNA"/>
</dbReference>
<dbReference type="EMBL" id="AL021026">
    <property type="status" value="NOT_ANNOTATED_CDS"/>
    <property type="molecule type" value="Genomic_DNA"/>
</dbReference>
<dbReference type="EMBL" id="KF459607">
    <property type="status" value="NOT_ANNOTATED_CDS"/>
    <property type="molecule type" value="Genomic_DNA"/>
</dbReference>
<dbReference type="EMBL" id="CH471067">
    <property type="protein sequence ID" value="EAW90889.1"/>
    <property type="molecule type" value="Genomic_DNA"/>
</dbReference>
<dbReference type="EMBL" id="BC005894">
    <property type="protein sequence ID" value="AAH05894.1"/>
    <property type="molecule type" value="mRNA"/>
</dbReference>
<dbReference type="CCDS" id="CCDS1293.2"/>
<dbReference type="RefSeq" id="NP_001451.2">
    <property type="nucleotide sequence ID" value="NM_001460.5"/>
</dbReference>
<dbReference type="SMR" id="Q99518"/>
<dbReference type="BioGRID" id="108614">
    <property type="interactions" value="10"/>
</dbReference>
<dbReference type="FunCoup" id="Q99518">
    <property type="interactions" value="136"/>
</dbReference>
<dbReference type="IntAct" id="Q99518">
    <property type="interactions" value="5"/>
</dbReference>
<dbReference type="MINT" id="Q99518"/>
<dbReference type="STRING" id="9606.ENSP00000209929"/>
<dbReference type="ChEMBL" id="CHEMBL3542432"/>
<dbReference type="iPTMnet" id="Q99518"/>
<dbReference type="PhosphoSitePlus" id="Q99518"/>
<dbReference type="BioMuta" id="FMO2"/>
<dbReference type="DMDM" id="327478599"/>
<dbReference type="jPOST" id="Q99518"/>
<dbReference type="MassIVE" id="Q99518"/>
<dbReference type="PaxDb" id="9606-ENSP00000209929"/>
<dbReference type="PeptideAtlas" id="Q99518"/>
<dbReference type="ProteomicsDB" id="78307"/>
<dbReference type="Antibodypedia" id="34377">
    <property type="antibodies" value="142 antibodies from 25 providers"/>
</dbReference>
<dbReference type="DNASU" id="2327"/>
<dbReference type="Ensembl" id="ENST00000209929.10">
    <property type="protein sequence ID" value="ENSP00000209929.8"/>
    <property type="gene ID" value="ENSG00000094963.14"/>
</dbReference>
<dbReference type="GeneID" id="2327"/>
<dbReference type="KEGG" id="hsa:2327"/>
<dbReference type="MANE-Select" id="ENST00000209929.10">
    <property type="protein sequence ID" value="ENSP00000209929.8"/>
    <property type="RefSeq nucleotide sequence ID" value="NM_001460.5"/>
    <property type="RefSeq protein sequence ID" value="NP_001451.2"/>
</dbReference>
<dbReference type="UCSC" id="uc057ngi.1">
    <property type="organism name" value="human"/>
</dbReference>
<dbReference type="AGR" id="HGNC:3770"/>
<dbReference type="CTD" id="2327"/>
<dbReference type="DisGeNET" id="2327"/>
<dbReference type="GeneCards" id="FMO2"/>
<dbReference type="HGNC" id="HGNC:3770">
    <property type="gene designation" value="FMO2"/>
</dbReference>
<dbReference type="HPA" id="ENSG00000094963">
    <property type="expression patterns" value="Tissue enhanced (adipose tissue, lung)"/>
</dbReference>
<dbReference type="MIM" id="603955">
    <property type="type" value="gene"/>
</dbReference>
<dbReference type="neXtProt" id="NX_Q99518"/>
<dbReference type="OpenTargets" id="ENSG00000094963"/>
<dbReference type="PharmGKB" id="PA164741534"/>
<dbReference type="VEuPathDB" id="HostDB:ENSG00000094963"/>
<dbReference type="eggNOG" id="KOG1399">
    <property type="taxonomic scope" value="Eukaryota"/>
</dbReference>
<dbReference type="GeneTree" id="ENSGT00940000161099"/>
<dbReference type="HOGENOM" id="CLU_006909_8_2_1"/>
<dbReference type="InParanoid" id="Q99518"/>
<dbReference type="OMA" id="CTGHHFL"/>
<dbReference type="OrthoDB" id="66881at2759"/>
<dbReference type="PAN-GO" id="Q99518">
    <property type="GO annotations" value="1 GO annotation based on evolutionary models"/>
</dbReference>
<dbReference type="PhylomeDB" id="Q99518"/>
<dbReference type="TreeFam" id="TF105285"/>
<dbReference type="BRENDA" id="1.14.13.8">
    <property type="organism ID" value="2681"/>
</dbReference>
<dbReference type="PathwayCommons" id="Q99518"/>
<dbReference type="Reactome" id="R-HSA-217271">
    <property type="pathway name" value="FMO oxidises nucleophiles"/>
</dbReference>
<dbReference type="SignaLink" id="Q99518"/>
<dbReference type="BioGRID-ORCS" id="2327">
    <property type="hits" value="3 hits in 1141 CRISPR screens"/>
</dbReference>
<dbReference type="ChiTaRS" id="FMO2">
    <property type="organism name" value="human"/>
</dbReference>
<dbReference type="GeneWiki" id="FMO2"/>
<dbReference type="GenomeRNAi" id="2327"/>
<dbReference type="Pharos" id="Q99518">
    <property type="development level" value="Tbio"/>
</dbReference>
<dbReference type="PRO" id="PR:Q99518"/>
<dbReference type="Proteomes" id="UP000005640">
    <property type="component" value="Chromosome 1"/>
</dbReference>
<dbReference type="RNAct" id="Q99518">
    <property type="molecule type" value="protein"/>
</dbReference>
<dbReference type="Bgee" id="ENSG00000094963">
    <property type="expression patterns" value="Expressed in pericardium and 172 other cell types or tissues"/>
</dbReference>
<dbReference type="ExpressionAtlas" id="Q99518">
    <property type="expression patterns" value="baseline and differential"/>
</dbReference>
<dbReference type="GO" id="GO:0005789">
    <property type="term" value="C:endoplasmic reticulum membrane"/>
    <property type="evidence" value="ECO:0000304"/>
    <property type="project" value="Reactome"/>
</dbReference>
<dbReference type="GO" id="GO:0016020">
    <property type="term" value="C:membrane"/>
    <property type="evidence" value="ECO:0000314"/>
    <property type="project" value="UniProtKB"/>
</dbReference>
<dbReference type="GO" id="GO:0050660">
    <property type="term" value="F:flavin adenine dinucleotide binding"/>
    <property type="evidence" value="ECO:0007669"/>
    <property type="project" value="InterPro"/>
</dbReference>
<dbReference type="GO" id="GO:0004499">
    <property type="term" value="F:N,N-dimethylaniline monooxygenase activity"/>
    <property type="evidence" value="ECO:0000314"/>
    <property type="project" value="BHF-UCL"/>
</dbReference>
<dbReference type="GO" id="GO:0050661">
    <property type="term" value="F:NADP binding"/>
    <property type="evidence" value="ECO:0007669"/>
    <property type="project" value="InterPro"/>
</dbReference>
<dbReference type="GO" id="GO:0097009">
    <property type="term" value="P:energy homeostasis"/>
    <property type="evidence" value="ECO:0007669"/>
    <property type="project" value="Ensembl"/>
</dbReference>
<dbReference type="GO" id="GO:0006739">
    <property type="term" value="P:NADP metabolic process"/>
    <property type="evidence" value="ECO:0000314"/>
    <property type="project" value="BHF-UCL"/>
</dbReference>
<dbReference type="GO" id="GO:0046322">
    <property type="term" value="P:negative regulation of fatty acid oxidation"/>
    <property type="evidence" value="ECO:0007669"/>
    <property type="project" value="Ensembl"/>
</dbReference>
<dbReference type="GO" id="GO:0006082">
    <property type="term" value="P:organic acid metabolic process"/>
    <property type="evidence" value="ECO:0000314"/>
    <property type="project" value="BHF-UCL"/>
</dbReference>
<dbReference type="GO" id="GO:0072592">
    <property type="term" value="P:oxygen metabolic process"/>
    <property type="evidence" value="ECO:0007669"/>
    <property type="project" value="Ensembl"/>
</dbReference>
<dbReference type="GO" id="GO:0009404">
    <property type="term" value="P:toxin metabolic process"/>
    <property type="evidence" value="ECO:0000314"/>
    <property type="project" value="BHF-UCL"/>
</dbReference>
<dbReference type="GO" id="GO:0006805">
    <property type="term" value="P:xenobiotic metabolic process"/>
    <property type="evidence" value="ECO:0000314"/>
    <property type="project" value="BHF-UCL"/>
</dbReference>
<dbReference type="FunFam" id="3.50.50.60:FF:000042">
    <property type="entry name" value="Dimethylaniline monooxygenase [N-oxide-forming]"/>
    <property type="match status" value="1"/>
</dbReference>
<dbReference type="FunFam" id="3.50.50.60:FF:000073">
    <property type="entry name" value="Dimethylaniline monooxygenase [N-oxide-forming]"/>
    <property type="match status" value="1"/>
</dbReference>
<dbReference type="FunFam" id="3.50.50.60:FF:000409">
    <property type="entry name" value="Dimethylaniline monooxygenase [N-oxide-forming]"/>
    <property type="match status" value="1"/>
</dbReference>
<dbReference type="Gene3D" id="3.50.50.60">
    <property type="entry name" value="FAD/NAD(P)-binding domain"/>
    <property type="match status" value="2"/>
</dbReference>
<dbReference type="InterPro" id="IPR036188">
    <property type="entry name" value="FAD/NAD-bd_sf"/>
</dbReference>
<dbReference type="InterPro" id="IPR000960">
    <property type="entry name" value="Flavin_mOase"/>
</dbReference>
<dbReference type="InterPro" id="IPR020946">
    <property type="entry name" value="Flavin_mOase-like"/>
</dbReference>
<dbReference type="InterPro" id="IPR002254">
    <property type="entry name" value="Flavin_mOase_2"/>
</dbReference>
<dbReference type="InterPro" id="IPR050346">
    <property type="entry name" value="FMO-like"/>
</dbReference>
<dbReference type="PANTHER" id="PTHR23023">
    <property type="entry name" value="DIMETHYLANILINE MONOOXYGENASE"/>
    <property type="match status" value="1"/>
</dbReference>
<dbReference type="Pfam" id="PF00743">
    <property type="entry name" value="FMO-like"/>
    <property type="match status" value="1"/>
</dbReference>
<dbReference type="PIRSF" id="PIRSF000332">
    <property type="entry name" value="FMO"/>
    <property type="match status" value="1"/>
</dbReference>
<dbReference type="PRINTS" id="PR00370">
    <property type="entry name" value="FMOXYGENASE"/>
</dbReference>
<dbReference type="PRINTS" id="PR01122">
    <property type="entry name" value="FMOXYGENASE2"/>
</dbReference>
<dbReference type="SUPFAM" id="SSF51905">
    <property type="entry name" value="FAD/NAD(P)-binding domain"/>
    <property type="match status" value="2"/>
</dbReference>
<accession>Q99518</accession>
<accession>Q5EBX4</accession>
<accession>Q86U73</accession>
<accession>Q9BRX1</accession>
<evidence type="ECO:0000250" key="1">
    <source>
        <dbReference type="UniProtKB" id="P17635"/>
    </source>
</evidence>
<evidence type="ECO:0000250" key="2">
    <source>
        <dbReference type="UniProtKB" id="Q9HFE4"/>
    </source>
</evidence>
<evidence type="ECO:0000255" key="3"/>
<evidence type="ECO:0000269" key="4">
    <source>
    </source>
</evidence>
<evidence type="ECO:0000269" key="5">
    <source>
    </source>
</evidence>
<evidence type="ECO:0000269" key="6">
    <source>
    </source>
</evidence>
<evidence type="ECO:0000269" key="7">
    <source>
    </source>
</evidence>
<evidence type="ECO:0000269" key="8">
    <source>
    </source>
</evidence>
<evidence type="ECO:0000269" key="9">
    <source>
    </source>
</evidence>
<evidence type="ECO:0000269" key="10">
    <source>
    </source>
</evidence>
<evidence type="ECO:0000269" key="11">
    <source>
    </source>
</evidence>
<evidence type="ECO:0000269" key="12">
    <source>
    </source>
</evidence>
<evidence type="ECO:0000269" key="13">
    <source>
    </source>
</evidence>
<evidence type="ECO:0000269" key="14">
    <source ref="2"/>
</evidence>
<evidence type="ECO:0000269" key="15">
    <source ref="3"/>
</evidence>
<evidence type="ECO:0000269" key="16">
    <source ref="5"/>
</evidence>
<evidence type="ECO:0000305" key="17"/>
<evidence type="ECO:0000312" key="18">
    <source>
        <dbReference type="HGNC" id="HGNC:3770"/>
    </source>
</evidence>